<proteinExistence type="evidence at protein level"/>
<protein>
    <recommendedName>
        <fullName>Snaclec jerdonuxin subunit beta</fullName>
    </recommendedName>
</protein>
<reference evidence="5 6" key="1">
    <citation type="journal article" date="2011" name="Toxicon">
        <title>Jerdonuxin, a novel snaclec (snake C-type lectin) with platelet aggregation activity from Trimeresurus jerdonii venom.</title>
        <authorList>
            <person name="Chen Z.M."/>
            <person name="Wu J.B."/>
            <person name="Zhang Y."/>
            <person name="Yu G.Y."/>
            <person name="Lee W.H."/>
            <person name="Lu Q.M."/>
            <person name="Zhang Y."/>
        </authorList>
    </citation>
    <scope>NUCLEOTIDE SEQUENCE [MRNA]</scope>
    <scope>PROTEIN SEQUENCE OF 24-49</scope>
    <scope>FUNCTION</scope>
    <source>
        <tissue evidence="4">Venom</tissue>
    </source>
</reference>
<comment type="function">
    <text evidence="4">Snaclec that strongly induces platelet aggregation, in a dose-dependent manner.</text>
</comment>
<comment type="subunit">
    <text evidence="1">Tetramer of 4 heterodimers of alpha and beta subunits; disulfide-linked.</text>
</comment>
<comment type="subcellular location">
    <subcellularLocation>
        <location evidence="4">Secreted</location>
    </subcellularLocation>
</comment>
<comment type="tissue specificity">
    <text evidence="4">Expressed by the venom gland.</text>
</comment>
<comment type="similarity">
    <text evidence="5">Belongs to the snaclec family.</text>
</comment>
<accession>E2DQZ5</accession>
<keyword id="KW-0903">Direct protein sequencing</keyword>
<keyword id="KW-1015">Disulfide bond</keyword>
<keyword id="KW-1199">Hemostasis impairing toxin</keyword>
<keyword id="KW-0430">Lectin</keyword>
<keyword id="KW-1202">Platelet aggregation activating toxin</keyword>
<keyword id="KW-0964">Secreted</keyword>
<keyword id="KW-0732">Signal</keyword>
<keyword id="KW-0800">Toxin</keyword>
<dbReference type="EMBL" id="GU136388">
    <property type="protein sequence ID" value="ADK56181.1"/>
    <property type="molecule type" value="mRNA"/>
</dbReference>
<dbReference type="SMR" id="E2DQZ5"/>
<dbReference type="GO" id="GO:0005576">
    <property type="term" value="C:extracellular region"/>
    <property type="evidence" value="ECO:0007669"/>
    <property type="project" value="UniProtKB-SubCell"/>
</dbReference>
<dbReference type="GO" id="GO:0030246">
    <property type="term" value="F:carbohydrate binding"/>
    <property type="evidence" value="ECO:0007669"/>
    <property type="project" value="UniProtKB-KW"/>
</dbReference>
<dbReference type="GO" id="GO:0090729">
    <property type="term" value="F:toxin activity"/>
    <property type="evidence" value="ECO:0007669"/>
    <property type="project" value="UniProtKB-KW"/>
</dbReference>
<dbReference type="FunFam" id="3.10.100.10:FF:000087">
    <property type="entry name" value="Snaclec rhodocetin subunit delta"/>
    <property type="match status" value="1"/>
</dbReference>
<dbReference type="Gene3D" id="3.10.100.10">
    <property type="entry name" value="Mannose-Binding Protein A, subunit A"/>
    <property type="match status" value="1"/>
</dbReference>
<dbReference type="InterPro" id="IPR001304">
    <property type="entry name" value="C-type_lectin-like"/>
</dbReference>
<dbReference type="InterPro" id="IPR016186">
    <property type="entry name" value="C-type_lectin-like/link_sf"/>
</dbReference>
<dbReference type="InterPro" id="IPR050111">
    <property type="entry name" value="C-type_lectin/snaclec_domain"/>
</dbReference>
<dbReference type="InterPro" id="IPR018378">
    <property type="entry name" value="C-type_lectin_CS"/>
</dbReference>
<dbReference type="InterPro" id="IPR016187">
    <property type="entry name" value="CTDL_fold"/>
</dbReference>
<dbReference type="PANTHER" id="PTHR22803">
    <property type="entry name" value="MANNOSE, PHOSPHOLIPASE, LECTIN RECEPTOR RELATED"/>
    <property type="match status" value="1"/>
</dbReference>
<dbReference type="Pfam" id="PF00059">
    <property type="entry name" value="Lectin_C"/>
    <property type="match status" value="1"/>
</dbReference>
<dbReference type="PRINTS" id="PR01504">
    <property type="entry name" value="PNCREATITSAP"/>
</dbReference>
<dbReference type="SMART" id="SM00034">
    <property type="entry name" value="CLECT"/>
    <property type="match status" value="1"/>
</dbReference>
<dbReference type="SUPFAM" id="SSF56436">
    <property type="entry name" value="C-type lectin-like"/>
    <property type="match status" value="1"/>
</dbReference>
<dbReference type="PROSITE" id="PS00615">
    <property type="entry name" value="C_TYPE_LECTIN_1"/>
    <property type="match status" value="1"/>
</dbReference>
<dbReference type="PROSITE" id="PS50041">
    <property type="entry name" value="C_TYPE_LECTIN_2"/>
    <property type="match status" value="1"/>
</dbReference>
<feature type="signal peptide" evidence="4">
    <location>
        <begin position="1"/>
        <end position="23"/>
    </location>
</feature>
<feature type="chain" id="PRO_0000413659" description="Snaclec jerdonuxin subunit beta">
    <location>
        <begin position="24"/>
        <end position="148"/>
    </location>
</feature>
<feature type="domain" description="C-type lectin" evidence="3">
    <location>
        <begin position="34"/>
        <end position="145"/>
    </location>
</feature>
<feature type="disulfide bond" description="Interchain (with C-158 in subunit alpha of tetrameric partner)" evidence="2 3">
    <location>
        <position position="26"/>
    </location>
</feature>
<feature type="disulfide bond" evidence="2 3">
    <location>
        <begin position="27"/>
        <end position="38"/>
    </location>
</feature>
<feature type="disulfide bond" evidence="2 3">
    <location>
        <begin position="55"/>
        <end position="144"/>
    </location>
</feature>
<feature type="disulfide bond" description="Interchain (with C-104 in subunit alpha of heterodimeric partner)" evidence="2 3">
    <location>
        <position position="100"/>
    </location>
</feature>
<feature type="disulfide bond" evidence="2 3">
    <location>
        <begin position="121"/>
        <end position="136"/>
    </location>
</feature>
<sequence length="148" mass="17153">MVRFIFVSFGLLVVFLSLSGIGAGFCCPWGWSSYDEHCYQVFQQKMNWEDAEKFCIQQHKGSHLVSFHSSEEVDLVTSKTFPILKHDFVWMGLSNVWNECTREWSDGTKLDYKAWSGQSDCIVSKTTDNQWLSMDCSSKRYIVCKFQA</sequence>
<name>SLJB_PROJR</name>
<organism>
    <name type="scientific">Protobothrops jerdonii</name>
    <name type="common">Jerdon's pitviper</name>
    <name type="synonym">Trimeresurus jerdonii</name>
    <dbReference type="NCBI Taxonomy" id="242841"/>
    <lineage>
        <taxon>Eukaryota</taxon>
        <taxon>Metazoa</taxon>
        <taxon>Chordata</taxon>
        <taxon>Craniata</taxon>
        <taxon>Vertebrata</taxon>
        <taxon>Euteleostomi</taxon>
        <taxon>Lepidosauria</taxon>
        <taxon>Squamata</taxon>
        <taxon>Bifurcata</taxon>
        <taxon>Unidentata</taxon>
        <taxon>Episquamata</taxon>
        <taxon>Toxicofera</taxon>
        <taxon>Serpentes</taxon>
        <taxon>Colubroidea</taxon>
        <taxon>Viperidae</taxon>
        <taxon>Crotalinae</taxon>
        <taxon>Protobothrops</taxon>
    </lineage>
</organism>
<evidence type="ECO:0000250" key="1"/>
<evidence type="ECO:0000250" key="2">
    <source>
        <dbReference type="UniProtKB" id="Q6TPG9"/>
    </source>
</evidence>
<evidence type="ECO:0000255" key="3">
    <source>
        <dbReference type="PROSITE-ProRule" id="PRU00040"/>
    </source>
</evidence>
<evidence type="ECO:0000269" key="4">
    <source>
    </source>
</evidence>
<evidence type="ECO:0000305" key="5"/>
<evidence type="ECO:0000312" key="6">
    <source>
        <dbReference type="EMBL" id="ADK56181.1"/>
    </source>
</evidence>